<gene>
    <name evidence="1" type="primary">katG1</name>
    <name type="ordered locus">lpp2454</name>
</gene>
<sequence>MDGKVGNTATGCPVIHGGMTSAETSNTAWWPNALNLDILHQHDTKTNPMGKDFNYREEVKKLDFVAFKKDLHALMTDSQAWWPADWGHYGGLMIRMSWHAAGSYRVADGRGGAGTGNQRFAPLNSWPDNVNLDKARRLLWPIKKKYGNKISWADLIVLAGTIAYESMGLKTFGFGFGREDIWHPEKDVYWGSEQEWLGAKRYDDKDRQSLETPLAAVQMGLIYVNPEGVNGQPDPLRTAQDVRVTFGRMAMNDEETVALTAGGHTVGKCHGNGNAKFLGPEPEAADIEDQGLGWINKTTRGIGRNTVSSGIEGAWTTHPTQWDNGYFYLLLNYDWELKKSPAGAWQWEPIHIKEEDKPVDVEDPAIRHNPIMTDADMAIKMDPVYRKIAERFYKDPDYFAEVFARAWFKLTHRDMGPKTRYIGPDVPKEDLIWQDPVPSGNRAYDIAAAKAKIAASNLTIGEMVSTAWDSARTFRGSDKRGGANGARIRLKPQKDWEGNEPQRLTKVLRILEGIAADTGASVADVIVLAGNVGIEKAAKAAGFDIIVPFAPGRGDATDDMTDAESFDVLEPLHDGYRNWLKKAYDVRPEELMLDRTQLMGLTAHEMTVLVGGLRVLGTNHNNTQHGVFTDRVGVLTNDFFVNLTDMANVWIPSKDNLYEIRDRKAGNIKWTATRVDLVFGSNSILRSYAEVYAQDDNKGKFIQDFVAAWTKVMNADRFDLA</sequence>
<reference key="1">
    <citation type="journal article" date="2004" name="Nat. Genet.">
        <title>Evidence in the Legionella pneumophila genome for exploitation of host cell functions and high genome plasticity.</title>
        <authorList>
            <person name="Cazalet C."/>
            <person name="Rusniok C."/>
            <person name="Brueggemann H."/>
            <person name="Zidane N."/>
            <person name="Magnier A."/>
            <person name="Ma L."/>
            <person name="Tichit M."/>
            <person name="Jarraud S."/>
            <person name="Bouchier C."/>
            <person name="Vandenesch F."/>
            <person name="Kunst F."/>
            <person name="Etienne J."/>
            <person name="Glaser P."/>
            <person name="Buchrieser C."/>
        </authorList>
    </citation>
    <scope>NUCLEOTIDE SEQUENCE [LARGE SCALE GENOMIC DNA]</scope>
    <source>
        <strain>Paris</strain>
    </source>
</reference>
<accession>Q5X2D9</accession>
<keyword id="KW-0349">Heme</keyword>
<keyword id="KW-0376">Hydrogen peroxide</keyword>
<keyword id="KW-0408">Iron</keyword>
<keyword id="KW-0479">Metal-binding</keyword>
<keyword id="KW-0560">Oxidoreductase</keyword>
<keyword id="KW-0575">Peroxidase</keyword>
<evidence type="ECO:0000255" key="1">
    <source>
        <dbReference type="HAMAP-Rule" id="MF_01961"/>
    </source>
</evidence>
<dbReference type="EC" id="1.11.1.21" evidence="1"/>
<dbReference type="EMBL" id="CR628336">
    <property type="protein sequence ID" value="CAH13607.1"/>
    <property type="molecule type" value="Genomic_DNA"/>
</dbReference>
<dbReference type="SMR" id="Q5X2D9"/>
<dbReference type="PeroxiBase" id="2641">
    <property type="entry name" value="LpnCP02_Paris"/>
</dbReference>
<dbReference type="KEGG" id="lpp:lpp2454"/>
<dbReference type="LegioList" id="lpp2454"/>
<dbReference type="HOGENOM" id="CLU_025424_2_0_6"/>
<dbReference type="GO" id="GO:0005829">
    <property type="term" value="C:cytosol"/>
    <property type="evidence" value="ECO:0007669"/>
    <property type="project" value="TreeGrafter"/>
</dbReference>
<dbReference type="GO" id="GO:0004096">
    <property type="term" value="F:catalase activity"/>
    <property type="evidence" value="ECO:0007669"/>
    <property type="project" value="UniProtKB-UniRule"/>
</dbReference>
<dbReference type="GO" id="GO:0020037">
    <property type="term" value="F:heme binding"/>
    <property type="evidence" value="ECO:0007669"/>
    <property type="project" value="InterPro"/>
</dbReference>
<dbReference type="GO" id="GO:0046872">
    <property type="term" value="F:metal ion binding"/>
    <property type="evidence" value="ECO:0007669"/>
    <property type="project" value="UniProtKB-KW"/>
</dbReference>
<dbReference type="GO" id="GO:0070301">
    <property type="term" value="P:cellular response to hydrogen peroxide"/>
    <property type="evidence" value="ECO:0007669"/>
    <property type="project" value="TreeGrafter"/>
</dbReference>
<dbReference type="GO" id="GO:0042744">
    <property type="term" value="P:hydrogen peroxide catabolic process"/>
    <property type="evidence" value="ECO:0007669"/>
    <property type="project" value="UniProtKB-KW"/>
</dbReference>
<dbReference type="CDD" id="cd00649">
    <property type="entry name" value="catalase_peroxidase_1"/>
    <property type="match status" value="1"/>
</dbReference>
<dbReference type="FunFam" id="1.10.420.10:FF:000004">
    <property type="entry name" value="Catalase-peroxidase"/>
    <property type="match status" value="1"/>
</dbReference>
<dbReference type="FunFam" id="1.10.520.10:FF:000002">
    <property type="entry name" value="Catalase-peroxidase"/>
    <property type="match status" value="1"/>
</dbReference>
<dbReference type="Gene3D" id="1.10.520.10">
    <property type="match status" value="2"/>
</dbReference>
<dbReference type="Gene3D" id="1.10.420.10">
    <property type="entry name" value="Peroxidase, domain 2"/>
    <property type="match status" value="2"/>
</dbReference>
<dbReference type="HAMAP" id="MF_01961">
    <property type="entry name" value="Catal_peroxid"/>
    <property type="match status" value="1"/>
</dbReference>
<dbReference type="InterPro" id="IPR000763">
    <property type="entry name" value="Catalase_peroxidase"/>
</dbReference>
<dbReference type="InterPro" id="IPR002016">
    <property type="entry name" value="Haem_peroxidase"/>
</dbReference>
<dbReference type="InterPro" id="IPR010255">
    <property type="entry name" value="Haem_peroxidase_sf"/>
</dbReference>
<dbReference type="InterPro" id="IPR019794">
    <property type="entry name" value="Peroxidases_AS"/>
</dbReference>
<dbReference type="NCBIfam" id="TIGR00198">
    <property type="entry name" value="cat_per_HPI"/>
    <property type="match status" value="1"/>
</dbReference>
<dbReference type="NCBIfam" id="NF011635">
    <property type="entry name" value="PRK15061.1"/>
    <property type="match status" value="1"/>
</dbReference>
<dbReference type="PANTHER" id="PTHR30555:SF6">
    <property type="entry name" value="CATALASE-PEROXIDASE"/>
    <property type="match status" value="1"/>
</dbReference>
<dbReference type="PANTHER" id="PTHR30555">
    <property type="entry name" value="HYDROPEROXIDASE I, BIFUNCTIONAL CATALASE-PEROXIDASE"/>
    <property type="match status" value="1"/>
</dbReference>
<dbReference type="Pfam" id="PF00141">
    <property type="entry name" value="peroxidase"/>
    <property type="match status" value="2"/>
</dbReference>
<dbReference type="PRINTS" id="PR00460">
    <property type="entry name" value="BPEROXIDASE"/>
</dbReference>
<dbReference type="PRINTS" id="PR00458">
    <property type="entry name" value="PEROXIDASE"/>
</dbReference>
<dbReference type="SUPFAM" id="SSF48113">
    <property type="entry name" value="Heme-dependent peroxidases"/>
    <property type="match status" value="2"/>
</dbReference>
<dbReference type="PROSITE" id="PS00436">
    <property type="entry name" value="PEROXIDASE_2"/>
    <property type="match status" value="1"/>
</dbReference>
<dbReference type="PROSITE" id="PS50873">
    <property type="entry name" value="PEROXIDASE_4"/>
    <property type="match status" value="1"/>
</dbReference>
<feature type="chain" id="PRO_0000354820" description="Catalase-peroxidase 1">
    <location>
        <begin position="1"/>
        <end position="721"/>
    </location>
</feature>
<feature type="active site" description="Proton acceptor" evidence="1">
    <location>
        <position position="99"/>
    </location>
</feature>
<feature type="binding site" description="axial binding residue" evidence="1">
    <location>
        <position position="264"/>
    </location>
    <ligand>
        <name>heme b</name>
        <dbReference type="ChEBI" id="CHEBI:60344"/>
    </ligand>
    <ligandPart>
        <name>Fe</name>
        <dbReference type="ChEBI" id="CHEBI:18248"/>
    </ligandPart>
</feature>
<feature type="site" description="Transition state stabilizer" evidence="1">
    <location>
        <position position="95"/>
    </location>
</feature>
<feature type="cross-link" description="Tryptophyl-tyrosyl-methioninium (Trp-Tyr) (with M-249)" evidence="1">
    <location>
        <begin position="98"/>
        <end position="223"/>
    </location>
</feature>
<feature type="cross-link" description="Tryptophyl-tyrosyl-methioninium (Tyr-Met) (with W-98)" evidence="1">
    <location>
        <begin position="223"/>
        <end position="249"/>
    </location>
</feature>
<comment type="function">
    <text evidence="1">Bifunctional enzyme with both catalase and broad-spectrum peroxidase activity.</text>
</comment>
<comment type="catalytic activity">
    <reaction evidence="1">
        <text>H2O2 + AH2 = A + 2 H2O</text>
        <dbReference type="Rhea" id="RHEA:30275"/>
        <dbReference type="ChEBI" id="CHEBI:13193"/>
        <dbReference type="ChEBI" id="CHEBI:15377"/>
        <dbReference type="ChEBI" id="CHEBI:16240"/>
        <dbReference type="ChEBI" id="CHEBI:17499"/>
        <dbReference type="EC" id="1.11.1.21"/>
    </reaction>
</comment>
<comment type="catalytic activity">
    <reaction evidence="1">
        <text>2 H2O2 = O2 + 2 H2O</text>
        <dbReference type="Rhea" id="RHEA:20309"/>
        <dbReference type="ChEBI" id="CHEBI:15377"/>
        <dbReference type="ChEBI" id="CHEBI:15379"/>
        <dbReference type="ChEBI" id="CHEBI:16240"/>
        <dbReference type="EC" id="1.11.1.21"/>
    </reaction>
</comment>
<comment type="cofactor">
    <cofactor evidence="1">
        <name>heme b</name>
        <dbReference type="ChEBI" id="CHEBI:60344"/>
    </cofactor>
    <text evidence="1">Binds 1 heme b (iron(II)-protoporphyrin IX) group per dimer.</text>
</comment>
<comment type="subunit">
    <text evidence="1">Homodimer or homotetramer.</text>
</comment>
<comment type="PTM">
    <text evidence="1">Formation of the three residue Trp-Tyr-Met cross-link is important for the catalase, but not the peroxidase activity of the enzyme.</text>
</comment>
<comment type="similarity">
    <text evidence="1">Belongs to the peroxidase family. Peroxidase/catalase subfamily.</text>
</comment>
<proteinExistence type="inferred from homology"/>
<organism>
    <name type="scientific">Legionella pneumophila (strain Paris)</name>
    <dbReference type="NCBI Taxonomy" id="297246"/>
    <lineage>
        <taxon>Bacteria</taxon>
        <taxon>Pseudomonadati</taxon>
        <taxon>Pseudomonadota</taxon>
        <taxon>Gammaproteobacteria</taxon>
        <taxon>Legionellales</taxon>
        <taxon>Legionellaceae</taxon>
        <taxon>Legionella</taxon>
    </lineage>
</organism>
<name>KATG1_LEGPA</name>
<protein>
    <recommendedName>
        <fullName evidence="1">Catalase-peroxidase 1</fullName>
        <shortName evidence="1">CP 1</shortName>
        <ecNumber evidence="1">1.11.1.21</ecNumber>
    </recommendedName>
    <alternativeName>
        <fullName evidence="1">Peroxidase/catalase 1</fullName>
    </alternativeName>
</protein>